<dbReference type="EC" id="2.3.2.27"/>
<dbReference type="EMBL" id="AF078822">
    <property type="protein sequence ID" value="AAC68671.1"/>
    <property type="molecule type" value="mRNA"/>
</dbReference>
<dbReference type="EMBL" id="DQ059097">
    <property type="protein sequence ID" value="AAY57583.1"/>
    <property type="molecule type" value="mRNA"/>
</dbReference>
<dbReference type="EMBL" id="AC007591">
    <property type="protein sequence ID" value="AAD39638.1"/>
    <property type="molecule type" value="Genomic_DNA"/>
</dbReference>
<dbReference type="EMBL" id="CP002684">
    <property type="protein sequence ID" value="AEE29264.1"/>
    <property type="molecule type" value="Genomic_DNA"/>
</dbReference>
<dbReference type="EMBL" id="AY075590">
    <property type="protein sequence ID" value="AAL91611.1"/>
    <property type="molecule type" value="mRNA"/>
</dbReference>
<dbReference type="EMBL" id="AY094057">
    <property type="protein sequence ID" value="AAM16213.1"/>
    <property type="molecule type" value="mRNA"/>
</dbReference>
<dbReference type="EMBL" id="AY088303">
    <property type="protein sequence ID" value="AAM65842.1"/>
    <property type="molecule type" value="mRNA"/>
</dbReference>
<dbReference type="PIR" id="T51842">
    <property type="entry name" value="T51842"/>
</dbReference>
<dbReference type="RefSeq" id="NP_172962.1">
    <property type="nucleotide sequence ID" value="NM_101378.3"/>
</dbReference>
<dbReference type="BioGRID" id="23313">
    <property type="interactions" value="1"/>
</dbReference>
<dbReference type="FunCoup" id="Q9ZT50">
    <property type="interactions" value="57"/>
</dbReference>
<dbReference type="IntAct" id="Q9ZT50">
    <property type="interactions" value="1"/>
</dbReference>
<dbReference type="STRING" id="3702.Q9ZT50"/>
<dbReference type="PaxDb" id="3702-AT1G15100.1"/>
<dbReference type="EnsemblPlants" id="AT1G15100.1">
    <property type="protein sequence ID" value="AT1G15100.1"/>
    <property type="gene ID" value="AT1G15100"/>
</dbReference>
<dbReference type="GeneID" id="838073"/>
<dbReference type="Gramene" id="AT1G15100.1">
    <property type="protein sequence ID" value="AT1G15100.1"/>
    <property type="gene ID" value="AT1G15100"/>
</dbReference>
<dbReference type="KEGG" id="ath:AT1G15100"/>
<dbReference type="Araport" id="AT1G15100"/>
<dbReference type="TAIR" id="AT1G15100">
    <property type="gene designation" value="RHA2A"/>
</dbReference>
<dbReference type="eggNOG" id="KOG0800">
    <property type="taxonomic scope" value="Eukaryota"/>
</dbReference>
<dbReference type="HOGENOM" id="CLU_013137_18_5_1"/>
<dbReference type="InParanoid" id="Q9ZT50"/>
<dbReference type="OMA" id="KLECRHV"/>
<dbReference type="OrthoDB" id="8062037at2759"/>
<dbReference type="PhylomeDB" id="Q9ZT50"/>
<dbReference type="UniPathway" id="UPA00143"/>
<dbReference type="PRO" id="PR:Q9ZT50"/>
<dbReference type="Proteomes" id="UP000006548">
    <property type="component" value="Chromosome 1"/>
</dbReference>
<dbReference type="ExpressionAtlas" id="Q9ZT50">
    <property type="expression patterns" value="baseline and differential"/>
</dbReference>
<dbReference type="GO" id="GO:0005737">
    <property type="term" value="C:cytoplasm"/>
    <property type="evidence" value="ECO:0007669"/>
    <property type="project" value="UniProtKB-SubCell"/>
</dbReference>
<dbReference type="GO" id="GO:0005634">
    <property type="term" value="C:nucleus"/>
    <property type="evidence" value="ECO:0007669"/>
    <property type="project" value="UniProtKB-SubCell"/>
</dbReference>
<dbReference type="GO" id="GO:0004842">
    <property type="term" value="F:ubiquitin-protein transferase activity"/>
    <property type="evidence" value="ECO:0000314"/>
    <property type="project" value="UniProtKB"/>
</dbReference>
<dbReference type="GO" id="GO:0008270">
    <property type="term" value="F:zinc ion binding"/>
    <property type="evidence" value="ECO:0007669"/>
    <property type="project" value="UniProtKB-KW"/>
</dbReference>
<dbReference type="GO" id="GO:0009738">
    <property type="term" value="P:abscisic acid-activated signaling pathway"/>
    <property type="evidence" value="ECO:0007669"/>
    <property type="project" value="UniProtKB-KW"/>
</dbReference>
<dbReference type="GO" id="GO:0009789">
    <property type="term" value="P:positive regulation of abscisic acid-activated signaling pathway"/>
    <property type="evidence" value="ECO:0000315"/>
    <property type="project" value="TAIR"/>
</dbReference>
<dbReference type="GO" id="GO:0016567">
    <property type="term" value="P:protein ubiquitination"/>
    <property type="evidence" value="ECO:0000314"/>
    <property type="project" value="UniProtKB"/>
</dbReference>
<dbReference type="GO" id="GO:0047484">
    <property type="term" value="P:regulation of response to osmotic stress"/>
    <property type="evidence" value="ECO:0000315"/>
    <property type="project" value="TAIR"/>
</dbReference>
<dbReference type="GO" id="GO:0009651">
    <property type="term" value="P:response to salt stress"/>
    <property type="evidence" value="ECO:0000315"/>
    <property type="project" value="TAIR"/>
</dbReference>
<dbReference type="Gene3D" id="3.30.40.10">
    <property type="entry name" value="Zinc/RING finger domain, C3HC4 (zinc finger)"/>
    <property type="match status" value="1"/>
</dbReference>
<dbReference type="InterPro" id="IPR001841">
    <property type="entry name" value="Znf_RING"/>
</dbReference>
<dbReference type="InterPro" id="IPR013083">
    <property type="entry name" value="Znf_RING/FYVE/PHD"/>
</dbReference>
<dbReference type="PANTHER" id="PTHR47662">
    <property type="entry name" value="RING-TYPE DOMAIN-CONTAINING PROTEIN"/>
    <property type="match status" value="1"/>
</dbReference>
<dbReference type="PANTHER" id="PTHR47662:SF1">
    <property type="entry name" value="RING-TYPE DOMAIN-CONTAINING PROTEIN"/>
    <property type="match status" value="1"/>
</dbReference>
<dbReference type="Pfam" id="PF13639">
    <property type="entry name" value="zf-RING_2"/>
    <property type="match status" value="1"/>
</dbReference>
<dbReference type="SMART" id="SM00184">
    <property type="entry name" value="RING"/>
    <property type="match status" value="1"/>
</dbReference>
<dbReference type="SUPFAM" id="SSF57850">
    <property type="entry name" value="RING/U-box"/>
    <property type="match status" value="1"/>
</dbReference>
<dbReference type="PROSITE" id="PS50089">
    <property type="entry name" value="ZF_RING_2"/>
    <property type="match status" value="1"/>
</dbReference>
<comment type="function">
    <text evidence="3 4 5">E3 ubiquitin-protein ligase involved in the positive regulation of abscisic acid (ABA) signaling and responses to salt and osmotic stresses during seed germination and early seedling development (PubMed:19286935, PubMed:21478367). Acts additively with RHA2B in regulating ABA signaling and drought response (PubMed:21478367). Possesses E3 ubiquitin ligase activity in vitro (PubMed:15644464, PubMed:19286935).</text>
</comment>
<comment type="catalytic activity">
    <reaction>
        <text>S-ubiquitinyl-[E2 ubiquitin-conjugating enzyme]-L-cysteine + [acceptor protein]-L-lysine = [E2 ubiquitin-conjugating enzyme]-L-cysteine + N(6)-ubiquitinyl-[acceptor protein]-L-lysine.</text>
        <dbReference type="EC" id="2.3.2.27"/>
    </reaction>
</comment>
<comment type="pathway">
    <text>Protein modification; protein ubiquitination.</text>
</comment>
<comment type="subunit">
    <text evidence="2 4">Interacts with NAC019 and NAC055.</text>
</comment>
<comment type="interaction">
    <interactant intactId="EBI-2025293">
        <id>Q9ZT50</id>
    </interactant>
    <interactant intactId="EBI-1786615">
        <id>Q9C932</id>
        <label>NAC019</label>
    </interactant>
    <organismsDiffer>false</organismsDiffer>
    <experiments>3</experiments>
</comment>
<comment type="subcellular location">
    <subcellularLocation>
        <location evidence="2 5">Cytoplasm</location>
    </subcellularLocation>
    <subcellularLocation>
        <location evidence="2 5">Nucleus</location>
    </subcellularLocation>
</comment>
<comment type="tissue specificity">
    <text evidence="2 4 6">Expressed in stems, flowers, cauline leaves, rosettes, siliques, seeds and roots.</text>
</comment>
<comment type="domain">
    <text>The ring domain is sufficient for the interaction with ANAC.</text>
</comment>
<comment type="domain">
    <text>Presence of both a nuclear localization sequence (NLS) and a nuclear export sequence (NES).</text>
</comment>
<comment type="disruption phenotype">
    <text evidence="4">Decreased sensitivity to ABA and salt and osmotic stresses during seed germination and early seedling development.</text>
</comment>
<proteinExistence type="evidence at protein level"/>
<keyword id="KW-0938">Abscisic acid signaling pathway</keyword>
<keyword id="KW-0963">Cytoplasm</keyword>
<keyword id="KW-0479">Metal-binding</keyword>
<keyword id="KW-0539">Nucleus</keyword>
<keyword id="KW-1185">Reference proteome</keyword>
<keyword id="KW-0346">Stress response</keyword>
<keyword id="KW-0808">Transferase</keyword>
<keyword id="KW-0833">Ubl conjugation pathway</keyword>
<keyword id="KW-0862">Zinc</keyword>
<keyword id="KW-0863">Zinc-finger</keyword>
<name>RHA2A_ARATH</name>
<gene>
    <name evidence="7" type="primary">RHA2A</name>
    <name type="ordered locus">At1g15100</name>
    <name type="ORF">F9L1.3</name>
</gene>
<feature type="chain" id="PRO_0000056035" description="E3 ubiquitin-protein ligase RHA2A">
    <location>
        <begin position="1"/>
        <end position="155"/>
    </location>
</feature>
<feature type="zinc finger region" description="RING-type; atypical" evidence="1">
    <location>
        <begin position="86"/>
        <end position="128"/>
    </location>
</feature>
<feature type="mutagenesis site" description="Loss of E3 ubiquitin ligase activity." evidence="4">
    <original>C</original>
    <variation>A</variation>
    <location>
        <position position="89"/>
    </location>
</feature>
<feature type="mutagenesis site" description="Decreased affinity for ANAC." evidence="2">
    <original>E</original>
    <variation>P</variation>
    <location>
        <position position="103"/>
    </location>
</feature>
<feature type="mutagenesis site" description="Abolishes the nuclear concentration." evidence="2">
    <original>KK</original>
    <variation>NE</variation>
    <location>
        <begin position="110"/>
        <end position="111"/>
    </location>
</feature>
<accession>Q9ZT50</accession>
<accession>Q4TU39</accession>
<evidence type="ECO:0000255" key="1">
    <source>
        <dbReference type="PROSITE-ProRule" id="PRU00175"/>
    </source>
</evidence>
<evidence type="ECO:0000269" key="2">
    <source>
    </source>
</evidence>
<evidence type="ECO:0000269" key="3">
    <source>
    </source>
</evidence>
<evidence type="ECO:0000269" key="4">
    <source>
    </source>
</evidence>
<evidence type="ECO:0000269" key="5">
    <source>
    </source>
</evidence>
<evidence type="ECO:0000269" key="6">
    <source>
    </source>
</evidence>
<evidence type="ECO:0000303" key="7">
    <source>
    </source>
</evidence>
<evidence type="ECO:0000305" key="8"/>
<sequence>MGLQGQLSDVSSDSIPLMLLSLLAVFINHLRSFLLRLTSKSNPNLPVDDVSIASGLANIIVLADQLSLNRLFSYRCGDGGGGGSDCVVCLSKLKEGEEVRKLECRHVFHKKCLEGWLHQFNFTCPLCRSALVSDDCVSKTQRSVGRDLISCFSLH</sequence>
<organism>
    <name type="scientific">Arabidopsis thaliana</name>
    <name type="common">Mouse-ear cress</name>
    <dbReference type="NCBI Taxonomy" id="3702"/>
    <lineage>
        <taxon>Eukaryota</taxon>
        <taxon>Viridiplantae</taxon>
        <taxon>Streptophyta</taxon>
        <taxon>Embryophyta</taxon>
        <taxon>Tracheophyta</taxon>
        <taxon>Spermatophyta</taxon>
        <taxon>Magnoliopsida</taxon>
        <taxon>eudicotyledons</taxon>
        <taxon>Gunneridae</taxon>
        <taxon>Pentapetalae</taxon>
        <taxon>rosids</taxon>
        <taxon>malvids</taxon>
        <taxon>Brassicales</taxon>
        <taxon>Brassicaceae</taxon>
        <taxon>Camelineae</taxon>
        <taxon>Arabidopsis</taxon>
    </lineage>
</organism>
<reference key="1">
    <citation type="journal article" date="1998" name="FEBS Lett.">
        <title>Widespread occurrence of a highly conserved RING-H2 zinc finger motif in the model plant Arabidopsis thaliana.</title>
        <authorList>
            <person name="Jensen R.B."/>
            <person name="Jensen K.L."/>
            <person name="Jespersen H.M."/>
            <person name="Skriver K."/>
        </authorList>
    </citation>
    <scope>NUCLEOTIDE SEQUENCE [MRNA]</scope>
    <scope>TISSUE SPECIFICITY</scope>
    <source>
        <strain>cv. Columbia</strain>
    </source>
</reference>
<reference key="2">
    <citation type="journal article" date="2005" name="Plant Physiol.">
        <title>Functional analysis of the RING-type ubiquitin ligase family of Arabidopsis.</title>
        <authorList>
            <person name="Stone S.L."/>
            <person name="Hauksdottir H."/>
            <person name="Troy A."/>
            <person name="Herschleb J."/>
            <person name="Kraft E."/>
            <person name="Callis J."/>
        </authorList>
    </citation>
    <scope>NUCLEOTIDE SEQUENCE [MRNA]</scope>
    <scope>FUNCTION</scope>
    <source>
        <strain>cv. Columbia</strain>
        <tissue>Leaf</tissue>
    </source>
</reference>
<reference key="3">
    <citation type="journal article" date="2000" name="Nature">
        <title>Sequence and analysis of chromosome 1 of the plant Arabidopsis thaliana.</title>
        <authorList>
            <person name="Theologis A."/>
            <person name="Ecker J.R."/>
            <person name="Palm C.J."/>
            <person name="Federspiel N.A."/>
            <person name="Kaul S."/>
            <person name="White O."/>
            <person name="Alonso J."/>
            <person name="Altafi H."/>
            <person name="Araujo R."/>
            <person name="Bowman C.L."/>
            <person name="Brooks S.Y."/>
            <person name="Buehler E."/>
            <person name="Chan A."/>
            <person name="Chao Q."/>
            <person name="Chen H."/>
            <person name="Cheuk R.F."/>
            <person name="Chin C.W."/>
            <person name="Chung M.K."/>
            <person name="Conn L."/>
            <person name="Conway A.B."/>
            <person name="Conway A.R."/>
            <person name="Creasy T.H."/>
            <person name="Dewar K."/>
            <person name="Dunn P."/>
            <person name="Etgu P."/>
            <person name="Feldblyum T.V."/>
            <person name="Feng J.-D."/>
            <person name="Fong B."/>
            <person name="Fujii C.Y."/>
            <person name="Gill J.E."/>
            <person name="Goldsmith A.D."/>
            <person name="Haas B."/>
            <person name="Hansen N.F."/>
            <person name="Hughes B."/>
            <person name="Huizar L."/>
            <person name="Hunter J.L."/>
            <person name="Jenkins J."/>
            <person name="Johnson-Hopson C."/>
            <person name="Khan S."/>
            <person name="Khaykin E."/>
            <person name="Kim C.J."/>
            <person name="Koo H.L."/>
            <person name="Kremenetskaia I."/>
            <person name="Kurtz D.B."/>
            <person name="Kwan A."/>
            <person name="Lam B."/>
            <person name="Langin-Hooper S."/>
            <person name="Lee A."/>
            <person name="Lee J.M."/>
            <person name="Lenz C.A."/>
            <person name="Li J.H."/>
            <person name="Li Y.-P."/>
            <person name="Lin X."/>
            <person name="Liu S.X."/>
            <person name="Liu Z.A."/>
            <person name="Luros J.S."/>
            <person name="Maiti R."/>
            <person name="Marziali A."/>
            <person name="Militscher J."/>
            <person name="Miranda M."/>
            <person name="Nguyen M."/>
            <person name="Nierman W.C."/>
            <person name="Osborne B.I."/>
            <person name="Pai G."/>
            <person name="Peterson J."/>
            <person name="Pham P.K."/>
            <person name="Rizzo M."/>
            <person name="Rooney T."/>
            <person name="Rowley D."/>
            <person name="Sakano H."/>
            <person name="Salzberg S.L."/>
            <person name="Schwartz J.R."/>
            <person name="Shinn P."/>
            <person name="Southwick A.M."/>
            <person name="Sun H."/>
            <person name="Tallon L.J."/>
            <person name="Tambunga G."/>
            <person name="Toriumi M.J."/>
            <person name="Town C.D."/>
            <person name="Utterback T."/>
            <person name="Van Aken S."/>
            <person name="Vaysberg M."/>
            <person name="Vysotskaia V.S."/>
            <person name="Walker M."/>
            <person name="Wu D."/>
            <person name="Yu G."/>
            <person name="Fraser C.M."/>
            <person name="Venter J.C."/>
            <person name="Davis R.W."/>
        </authorList>
    </citation>
    <scope>NUCLEOTIDE SEQUENCE [LARGE SCALE GENOMIC DNA]</scope>
    <source>
        <strain>cv. Columbia</strain>
    </source>
</reference>
<reference key="4">
    <citation type="journal article" date="2017" name="Plant J.">
        <title>Araport11: a complete reannotation of the Arabidopsis thaliana reference genome.</title>
        <authorList>
            <person name="Cheng C.Y."/>
            <person name="Krishnakumar V."/>
            <person name="Chan A.P."/>
            <person name="Thibaud-Nissen F."/>
            <person name="Schobel S."/>
            <person name="Town C.D."/>
        </authorList>
    </citation>
    <scope>GENOME REANNOTATION</scope>
    <source>
        <strain>cv. Columbia</strain>
    </source>
</reference>
<reference key="5">
    <citation type="journal article" date="2003" name="Science">
        <title>Empirical analysis of transcriptional activity in the Arabidopsis genome.</title>
        <authorList>
            <person name="Yamada K."/>
            <person name="Lim J."/>
            <person name="Dale J.M."/>
            <person name="Chen H."/>
            <person name="Shinn P."/>
            <person name="Palm C.J."/>
            <person name="Southwick A.M."/>
            <person name="Wu H.C."/>
            <person name="Kim C.J."/>
            <person name="Nguyen M."/>
            <person name="Pham P.K."/>
            <person name="Cheuk R.F."/>
            <person name="Karlin-Newmann G."/>
            <person name="Liu S.X."/>
            <person name="Lam B."/>
            <person name="Sakano H."/>
            <person name="Wu T."/>
            <person name="Yu G."/>
            <person name="Miranda M."/>
            <person name="Quach H.L."/>
            <person name="Tripp M."/>
            <person name="Chang C.H."/>
            <person name="Lee J.M."/>
            <person name="Toriumi M.J."/>
            <person name="Chan M.M."/>
            <person name="Tang C.C."/>
            <person name="Onodera C.S."/>
            <person name="Deng J.M."/>
            <person name="Akiyama K."/>
            <person name="Ansari Y."/>
            <person name="Arakawa T."/>
            <person name="Banh J."/>
            <person name="Banno F."/>
            <person name="Bowser L."/>
            <person name="Brooks S.Y."/>
            <person name="Carninci P."/>
            <person name="Chao Q."/>
            <person name="Choy N."/>
            <person name="Enju A."/>
            <person name="Goldsmith A.D."/>
            <person name="Gurjal M."/>
            <person name="Hansen N.F."/>
            <person name="Hayashizaki Y."/>
            <person name="Johnson-Hopson C."/>
            <person name="Hsuan V.W."/>
            <person name="Iida K."/>
            <person name="Karnes M."/>
            <person name="Khan S."/>
            <person name="Koesema E."/>
            <person name="Ishida J."/>
            <person name="Jiang P.X."/>
            <person name="Jones T."/>
            <person name="Kawai J."/>
            <person name="Kamiya A."/>
            <person name="Meyers C."/>
            <person name="Nakajima M."/>
            <person name="Narusaka M."/>
            <person name="Seki M."/>
            <person name="Sakurai T."/>
            <person name="Satou M."/>
            <person name="Tamse R."/>
            <person name="Vaysberg M."/>
            <person name="Wallender E.K."/>
            <person name="Wong C."/>
            <person name="Yamamura Y."/>
            <person name="Yuan S."/>
            <person name="Shinozaki K."/>
            <person name="Davis R.W."/>
            <person name="Theologis A."/>
            <person name="Ecker J.R."/>
        </authorList>
    </citation>
    <scope>NUCLEOTIDE SEQUENCE [LARGE SCALE MRNA]</scope>
    <source>
        <strain>cv. Columbia</strain>
    </source>
</reference>
<reference key="6">
    <citation type="submission" date="2002-03" db="EMBL/GenBank/DDBJ databases">
        <title>Full-length cDNA from Arabidopsis thaliana.</title>
        <authorList>
            <person name="Brover V.V."/>
            <person name="Troukhan M.E."/>
            <person name="Alexandrov N.A."/>
            <person name="Lu Y.-P."/>
            <person name="Flavell R.B."/>
            <person name="Feldmann K.A."/>
        </authorList>
    </citation>
    <scope>NUCLEOTIDE SEQUENCE [LARGE SCALE MRNA]</scope>
</reference>
<reference key="7">
    <citation type="journal article" date="2003" name="Biochem. J.">
        <title>Interactions between plant RING-H2 and plant-specific NAC (NAM/ATAF1/2/CUC2) proteins: RING-H2 molecular specificity and cellular localization.</title>
        <authorList>
            <person name="Greve K."/>
            <person name="La Cour T."/>
            <person name="Jensen M.K."/>
            <person name="Poulsen F.M."/>
            <person name="Skriver K."/>
        </authorList>
    </citation>
    <scope>TISSUE SPECIFICITY</scope>
    <scope>SUBCELLULAR LOCATION</scope>
    <scope>MUTAGENESIS OF GLU-103 AND 110-LYS-LYS-111</scope>
    <scope>INTERACTION WITH NAC019</scope>
</reference>
<reference key="8">
    <citation type="journal article" date="2009" name="Plant Physiol.">
        <title>The Arabidopsis RING finger E3 ligase RHA2a is a novel positive regulator of abscisic acid signaling during seed germination and early seedling development.</title>
        <authorList>
            <person name="Bu Q."/>
            <person name="Li H."/>
            <person name="Zhao Q."/>
            <person name="Jiang H."/>
            <person name="Zhai Q."/>
            <person name="Zhang J."/>
            <person name="Wu X."/>
            <person name="Sun J."/>
            <person name="Xie Q."/>
            <person name="Wang D."/>
            <person name="Li C."/>
        </authorList>
    </citation>
    <scope>FUNCTION</scope>
    <scope>INTERACTION WITH NAC019 AND NAC055</scope>
    <scope>TISSUE SPECIFICITY</scope>
    <scope>DISRUPTION PHENOTYPE</scope>
    <scope>MUTAGENESIS OF CYS-89</scope>
</reference>
<reference key="9">
    <citation type="journal article" date="2011" name="Plant Physiol.">
        <title>The Arabidopsis RING finger E3 ligase RHA2b acts additively with RHA2a in regulating abscisic acid signaling and drought response.</title>
        <authorList>
            <person name="Li H."/>
            <person name="Jiang H."/>
            <person name="Bu Q."/>
            <person name="Zhao Q."/>
            <person name="Sun J."/>
            <person name="Xie Q."/>
            <person name="Li C."/>
        </authorList>
    </citation>
    <scope>FUNCTION</scope>
    <scope>SUBCELLULAR LOCATION</scope>
</reference>
<protein>
    <recommendedName>
        <fullName evidence="8">E3 ubiquitin-protein ligase RHA2A</fullName>
        <ecNumber>2.3.2.27</ecNumber>
    </recommendedName>
    <alternativeName>
        <fullName evidence="7">RING-H2 finger A2a</fullName>
    </alternativeName>
    <alternativeName>
        <fullName evidence="8">RING-H2 zinc finger protein RHA2a</fullName>
    </alternativeName>
    <alternativeName>
        <fullName evidence="8">RING-type E3 ubiquitin transferase RHA2A</fullName>
    </alternativeName>
</protein>